<accession>A0R898</accession>
<keyword id="KW-0963">Cytoplasm</keyword>
<keyword id="KW-0238">DNA-binding</keyword>
<protein>
    <recommendedName>
        <fullName evidence="1">Nucleoid-associated protein BALH_0020</fullName>
    </recommendedName>
</protein>
<name>Y020_BACAH</name>
<proteinExistence type="inferred from homology"/>
<gene>
    <name type="ordered locus">BALH_0020</name>
</gene>
<feature type="chain" id="PRO_1000003683" description="Nucleoid-associated protein BALH_0020">
    <location>
        <begin position="1"/>
        <end position="109"/>
    </location>
</feature>
<organism>
    <name type="scientific">Bacillus thuringiensis (strain Al Hakam)</name>
    <dbReference type="NCBI Taxonomy" id="412694"/>
    <lineage>
        <taxon>Bacteria</taxon>
        <taxon>Bacillati</taxon>
        <taxon>Bacillota</taxon>
        <taxon>Bacilli</taxon>
        <taxon>Bacillales</taxon>
        <taxon>Bacillaceae</taxon>
        <taxon>Bacillus</taxon>
        <taxon>Bacillus cereus group</taxon>
    </lineage>
</organism>
<reference key="1">
    <citation type="journal article" date="2007" name="J. Bacteriol.">
        <title>The complete genome sequence of Bacillus thuringiensis Al Hakam.</title>
        <authorList>
            <person name="Challacombe J.F."/>
            <person name="Altherr M.R."/>
            <person name="Xie G."/>
            <person name="Bhotika S.S."/>
            <person name="Brown N."/>
            <person name="Bruce D."/>
            <person name="Campbell C.S."/>
            <person name="Campbell M.L."/>
            <person name="Chen J."/>
            <person name="Chertkov O."/>
            <person name="Cleland C."/>
            <person name="Dimitrijevic M."/>
            <person name="Doggett N.A."/>
            <person name="Fawcett J.J."/>
            <person name="Glavina T."/>
            <person name="Goodwin L.A."/>
            <person name="Green L.D."/>
            <person name="Han C.S."/>
            <person name="Hill K.K."/>
            <person name="Hitchcock P."/>
            <person name="Jackson P.J."/>
            <person name="Keim P."/>
            <person name="Kewalramani A.R."/>
            <person name="Longmire J."/>
            <person name="Lucas S."/>
            <person name="Malfatti S."/>
            <person name="Martinez D."/>
            <person name="McMurry K."/>
            <person name="Meincke L.J."/>
            <person name="Misra M."/>
            <person name="Moseman B.L."/>
            <person name="Mundt M."/>
            <person name="Munk A.C."/>
            <person name="Okinaka R.T."/>
            <person name="Parson-Quintana B."/>
            <person name="Reilly L.P."/>
            <person name="Richardson P."/>
            <person name="Robinson D.L."/>
            <person name="Saunders E."/>
            <person name="Tapia R."/>
            <person name="Tesmer J.G."/>
            <person name="Thayer N."/>
            <person name="Thompson L.S."/>
            <person name="Tice H."/>
            <person name="Ticknor L.O."/>
            <person name="Wills P.L."/>
            <person name="Gilna P."/>
            <person name="Brettin T.S."/>
        </authorList>
    </citation>
    <scope>NUCLEOTIDE SEQUENCE [LARGE SCALE GENOMIC DNA]</scope>
    <source>
        <strain>Al Hakam</strain>
    </source>
</reference>
<sequence length="109" mass="11863">MMRGGMGNMNNMMKQMQKMQKEMAKAQEELGEKTVEGTAGGGMITVIANGHKQILEVKVKEEVVDPEDIEMLQDLVLAATNDALKKADELSNSTMGKFTKGLNLPGGMF</sequence>
<comment type="function">
    <text evidence="1">Binds to DNA and alters its conformation. May be involved in regulation of gene expression, nucleoid organization and DNA protection.</text>
</comment>
<comment type="subunit">
    <text evidence="1">Homodimer.</text>
</comment>
<comment type="subcellular location">
    <subcellularLocation>
        <location evidence="1">Cytoplasm</location>
        <location evidence="1">Nucleoid</location>
    </subcellularLocation>
</comment>
<comment type="similarity">
    <text evidence="1">Belongs to the YbaB/EbfC family.</text>
</comment>
<evidence type="ECO:0000255" key="1">
    <source>
        <dbReference type="HAMAP-Rule" id="MF_00274"/>
    </source>
</evidence>
<dbReference type="EMBL" id="CP000485">
    <property type="protein sequence ID" value="ABK83441.1"/>
    <property type="molecule type" value="Genomic_DNA"/>
</dbReference>
<dbReference type="SMR" id="A0R898"/>
<dbReference type="KEGG" id="btl:BALH_0020"/>
<dbReference type="HOGENOM" id="CLU_140930_1_0_9"/>
<dbReference type="GO" id="GO:0043590">
    <property type="term" value="C:bacterial nucleoid"/>
    <property type="evidence" value="ECO:0007669"/>
    <property type="project" value="UniProtKB-UniRule"/>
</dbReference>
<dbReference type="GO" id="GO:0005829">
    <property type="term" value="C:cytosol"/>
    <property type="evidence" value="ECO:0007669"/>
    <property type="project" value="TreeGrafter"/>
</dbReference>
<dbReference type="GO" id="GO:0003677">
    <property type="term" value="F:DNA binding"/>
    <property type="evidence" value="ECO:0007669"/>
    <property type="project" value="UniProtKB-UniRule"/>
</dbReference>
<dbReference type="FunFam" id="3.30.1310.10:FF:000002">
    <property type="entry name" value="Nucleoid-associated protein IKC_06587"/>
    <property type="match status" value="1"/>
</dbReference>
<dbReference type="Gene3D" id="3.30.1310.10">
    <property type="entry name" value="Nucleoid-associated protein YbaB-like domain"/>
    <property type="match status" value="1"/>
</dbReference>
<dbReference type="HAMAP" id="MF_00274">
    <property type="entry name" value="DNA_YbaB_EbfC"/>
    <property type="match status" value="1"/>
</dbReference>
<dbReference type="InterPro" id="IPR036894">
    <property type="entry name" value="YbaB-like_sf"/>
</dbReference>
<dbReference type="InterPro" id="IPR004401">
    <property type="entry name" value="YbaB/EbfC"/>
</dbReference>
<dbReference type="NCBIfam" id="TIGR00103">
    <property type="entry name" value="DNA_YbaB_EbfC"/>
    <property type="match status" value="1"/>
</dbReference>
<dbReference type="PANTHER" id="PTHR33449">
    <property type="entry name" value="NUCLEOID-ASSOCIATED PROTEIN YBAB"/>
    <property type="match status" value="1"/>
</dbReference>
<dbReference type="PANTHER" id="PTHR33449:SF1">
    <property type="entry name" value="NUCLEOID-ASSOCIATED PROTEIN YBAB"/>
    <property type="match status" value="1"/>
</dbReference>
<dbReference type="Pfam" id="PF02575">
    <property type="entry name" value="YbaB_DNA_bd"/>
    <property type="match status" value="1"/>
</dbReference>
<dbReference type="PIRSF" id="PIRSF004555">
    <property type="entry name" value="UCP004555"/>
    <property type="match status" value="1"/>
</dbReference>
<dbReference type="SUPFAM" id="SSF82607">
    <property type="entry name" value="YbaB-like"/>
    <property type="match status" value="1"/>
</dbReference>